<sequence length="327" mass="33669">MQIKRSIEKIPGGMMLVPLFLGALCHTFSPGAGKYFGSFTNGMITGTVPILAVWFFCMGASIKLSATGTVLRKSGTLVVTKIAVAWVVAAIASRIIPEHGVEVGFFAGLSTLALVAAMDMTNGGLYASIMQQYGTKEEAGAFVLMSLESGPLMTMIILGTAGIASFEPHVFVGAVLPFLVGFALGNLDPELREFFSKAVQTLIPFFAFALGNTIDLTVIAQTGLLGILLGVAVIIVTGIPLIIADKLIGGGDGTAGIAASSSAGAAVATPVLIAEMVPAFKPMAPAATSLVATAVIVTSILVPILTSIWSRKVKARAAKIEILGTVK</sequence>
<name>KDGT_ECOLC</name>
<gene>
    <name evidence="1" type="primary">kdgT</name>
    <name type="ordered locus">EcolC_4108</name>
</gene>
<evidence type="ECO:0000255" key="1">
    <source>
        <dbReference type="HAMAP-Rule" id="MF_00070"/>
    </source>
</evidence>
<protein>
    <recommendedName>
        <fullName evidence="1">2-keto-3-deoxygluconate permease</fullName>
        <shortName evidence="1">KDG permease</shortName>
    </recommendedName>
</protein>
<proteinExistence type="inferred from homology"/>
<keyword id="KW-0997">Cell inner membrane</keyword>
<keyword id="KW-1003">Cell membrane</keyword>
<keyword id="KW-0472">Membrane</keyword>
<keyword id="KW-0762">Sugar transport</keyword>
<keyword id="KW-0769">Symport</keyword>
<keyword id="KW-0812">Transmembrane</keyword>
<keyword id="KW-1133">Transmembrane helix</keyword>
<keyword id="KW-0813">Transport</keyword>
<accession>B1IVG9</accession>
<comment type="function">
    <text evidence="1">Catalyzes the proton-dependent uptake of 2-keto-3-deoxygluconate (KDG) into the cell.</text>
</comment>
<comment type="catalytic activity">
    <reaction evidence="1">
        <text>2-dehydro-3-deoxy-D-gluconate(in) + H(+)(in) = 2-dehydro-3-deoxy-D-gluconate(out) + H(+)(out)</text>
        <dbReference type="Rhea" id="RHEA:29943"/>
        <dbReference type="ChEBI" id="CHEBI:15378"/>
        <dbReference type="ChEBI" id="CHEBI:57990"/>
    </reaction>
    <physiologicalReaction direction="right-to-left" evidence="1">
        <dbReference type="Rhea" id="RHEA:29945"/>
    </physiologicalReaction>
</comment>
<comment type="subcellular location">
    <subcellularLocation>
        <location evidence="1">Cell inner membrane</location>
        <topology evidence="1">Multi-pass membrane protein</topology>
    </subcellularLocation>
</comment>
<comment type="similarity">
    <text evidence="1">Belongs to the KdgT transporter family.</text>
</comment>
<dbReference type="EMBL" id="CP000946">
    <property type="protein sequence ID" value="ACA79706.1"/>
    <property type="molecule type" value="Genomic_DNA"/>
</dbReference>
<dbReference type="RefSeq" id="WP_001166063.1">
    <property type="nucleotide sequence ID" value="NZ_MTFT01000008.1"/>
</dbReference>
<dbReference type="GeneID" id="75204583"/>
<dbReference type="KEGG" id="ecl:EcolC_4108"/>
<dbReference type="HOGENOM" id="CLU_057476_0_1_6"/>
<dbReference type="GO" id="GO:0005886">
    <property type="term" value="C:plasma membrane"/>
    <property type="evidence" value="ECO:0007669"/>
    <property type="project" value="UniProtKB-SubCell"/>
</dbReference>
<dbReference type="GO" id="GO:0015649">
    <property type="term" value="F:2-keto-3-deoxygluconate:proton symporter activity"/>
    <property type="evidence" value="ECO:0007669"/>
    <property type="project" value="UniProtKB-UniRule"/>
</dbReference>
<dbReference type="HAMAP" id="MF_00070">
    <property type="entry name" value="KdgT"/>
    <property type="match status" value="1"/>
</dbReference>
<dbReference type="InterPro" id="IPR004684">
    <property type="entry name" value="2keto-3dGluconate_permease"/>
</dbReference>
<dbReference type="InterPro" id="IPR018395">
    <property type="entry name" value="2keto-3dGluconate_permease_sub"/>
</dbReference>
<dbReference type="NCBIfam" id="TIGR00793">
    <property type="entry name" value="kdgT"/>
    <property type="match status" value="1"/>
</dbReference>
<dbReference type="Pfam" id="PF03812">
    <property type="entry name" value="KdgT"/>
    <property type="match status" value="1"/>
</dbReference>
<feature type="chain" id="PRO_1000075120" description="2-keto-3-deoxygluconate permease">
    <location>
        <begin position="1"/>
        <end position="327"/>
    </location>
</feature>
<feature type="transmembrane region" description="Helical" evidence="1">
    <location>
        <begin position="10"/>
        <end position="30"/>
    </location>
</feature>
<feature type="transmembrane region" description="Helical" evidence="1">
    <location>
        <begin position="42"/>
        <end position="62"/>
    </location>
</feature>
<feature type="transmembrane region" description="Helical" evidence="1">
    <location>
        <begin position="73"/>
        <end position="93"/>
    </location>
</feature>
<feature type="transmembrane region" description="Helical" evidence="1">
    <location>
        <begin position="95"/>
        <end position="115"/>
    </location>
</feature>
<feature type="transmembrane region" description="Helical" evidence="1">
    <location>
        <begin position="139"/>
        <end position="159"/>
    </location>
</feature>
<feature type="transmembrane region" description="Helical" evidence="1">
    <location>
        <begin position="163"/>
        <end position="183"/>
    </location>
</feature>
<feature type="transmembrane region" description="Helical" evidence="1">
    <location>
        <begin position="199"/>
        <end position="219"/>
    </location>
</feature>
<feature type="transmembrane region" description="Helical" evidence="1">
    <location>
        <begin position="224"/>
        <end position="244"/>
    </location>
</feature>
<feature type="transmembrane region" description="Helical" evidence="1">
    <location>
        <begin position="254"/>
        <end position="274"/>
    </location>
</feature>
<feature type="transmembrane region" description="Helical" evidence="1">
    <location>
        <begin position="289"/>
        <end position="309"/>
    </location>
</feature>
<reference key="1">
    <citation type="submission" date="2008-02" db="EMBL/GenBank/DDBJ databases">
        <title>Complete sequence of Escherichia coli C str. ATCC 8739.</title>
        <authorList>
            <person name="Copeland A."/>
            <person name="Lucas S."/>
            <person name="Lapidus A."/>
            <person name="Glavina del Rio T."/>
            <person name="Dalin E."/>
            <person name="Tice H."/>
            <person name="Bruce D."/>
            <person name="Goodwin L."/>
            <person name="Pitluck S."/>
            <person name="Kiss H."/>
            <person name="Brettin T."/>
            <person name="Detter J.C."/>
            <person name="Han C."/>
            <person name="Kuske C.R."/>
            <person name="Schmutz J."/>
            <person name="Larimer F."/>
            <person name="Land M."/>
            <person name="Hauser L."/>
            <person name="Kyrpides N."/>
            <person name="Mikhailova N."/>
            <person name="Ingram L."/>
            <person name="Richardson P."/>
        </authorList>
    </citation>
    <scope>NUCLEOTIDE SEQUENCE [LARGE SCALE GENOMIC DNA]</scope>
    <source>
        <strain>ATCC 8739 / DSM 1576 / NBRC 3972 / NCIMB 8545 / WDCM 00012 / Crooks</strain>
    </source>
</reference>
<organism>
    <name type="scientific">Escherichia coli (strain ATCC 8739 / DSM 1576 / NBRC 3972 / NCIMB 8545 / WDCM 00012 / Crooks)</name>
    <dbReference type="NCBI Taxonomy" id="481805"/>
    <lineage>
        <taxon>Bacteria</taxon>
        <taxon>Pseudomonadati</taxon>
        <taxon>Pseudomonadota</taxon>
        <taxon>Gammaproteobacteria</taxon>
        <taxon>Enterobacterales</taxon>
        <taxon>Enterobacteriaceae</taxon>
        <taxon>Escherichia</taxon>
    </lineage>
</organism>